<protein>
    <recommendedName>
        <fullName evidence="1">Chorismate synthase</fullName>
        <shortName evidence="1">CS</shortName>
        <ecNumber evidence="1">4.2.3.5</ecNumber>
    </recommendedName>
    <alternativeName>
        <fullName evidence="1">5-enolpyruvylshikimate-3-phosphate phospholyase</fullName>
    </alternativeName>
</protein>
<keyword id="KW-0028">Amino-acid biosynthesis</keyword>
<keyword id="KW-0057">Aromatic amino acid biosynthesis</keyword>
<keyword id="KW-0274">FAD</keyword>
<keyword id="KW-0285">Flavoprotein</keyword>
<keyword id="KW-0288">FMN</keyword>
<keyword id="KW-0456">Lyase</keyword>
<keyword id="KW-0521">NADP</keyword>
<gene>
    <name evidence="1" type="primary">aroC</name>
    <name type="ordered locus">SpyM51182</name>
</gene>
<dbReference type="EC" id="4.2.3.5" evidence="1"/>
<dbReference type="EMBL" id="AM295007">
    <property type="protein sequence ID" value="CAM30507.1"/>
    <property type="molecule type" value="Genomic_DNA"/>
</dbReference>
<dbReference type="RefSeq" id="WP_011889004.1">
    <property type="nucleotide sequence ID" value="NC_009332.1"/>
</dbReference>
<dbReference type="SMR" id="A2RF78"/>
<dbReference type="KEGG" id="spf:SpyM51182"/>
<dbReference type="HOGENOM" id="CLU_034547_2_0_9"/>
<dbReference type="UniPathway" id="UPA00053">
    <property type="reaction ID" value="UER00090"/>
</dbReference>
<dbReference type="GO" id="GO:0005829">
    <property type="term" value="C:cytosol"/>
    <property type="evidence" value="ECO:0007669"/>
    <property type="project" value="TreeGrafter"/>
</dbReference>
<dbReference type="GO" id="GO:0004107">
    <property type="term" value="F:chorismate synthase activity"/>
    <property type="evidence" value="ECO:0007669"/>
    <property type="project" value="UniProtKB-UniRule"/>
</dbReference>
<dbReference type="GO" id="GO:0010181">
    <property type="term" value="F:FMN binding"/>
    <property type="evidence" value="ECO:0007669"/>
    <property type="project" value="TreeGrafter"/>
</dbReference>
<dbReference type="GO" id="GO:0008652">
    <property type="term" value="P:amino acid biosynthetic process"/>
    <property type="evidence" value="ECO:0007669"/>
    <property type="project" value="UniProtKB-KW"/>
</dbReference>
<dbReference type="GO" id="GO:0009073">
    <property type="term" value="P:aromatic amino acid family biosynthetic process"/>
    <property type="evidence" value="ECO:0007669"/>
    <property type="project" value="UniProtKB-KW"/>
</dbReference>
<dbReference type="GO" id="GO:0009423">
    <property type="term" value="P:chorismate biosynthetic process"/>
    <property type="evidence" value="ECO:0007669"/>
    <property type="project" value="UniProtKB-UniRule"/>
</dbReference>
<dbReference type="CDD" id="cd07304">
    <property type="entry name" value="Chorismate_synthase"/>
    <property type="match status" value="1"/>
</dbReference>
<dbReference type="FunFam" id="3.60.150.10:FF:000002">
    <property type="entry name" value="Chorismate synthase"/>
    <property type="match status" value="1"/>
</dbReference>
<dbReference type="Gene3D" id="3.60.150.10">
    <property type="entry name" value="Chorismate synthase AroC"/>
    <property type="match status" value="1"/>
</dbReference>
<dbReference type="HAMAP" id="MF_00300">
    <property type="entry name" value="Chorismate_synth"/>
    <property type="match status" value="1"/>
</dbReference>
<dbReference type="InterPro" id="IPR000453">
    <property type="entry name" value="Chorismate_synth"/>
</dbReference>
<dbReference type="InterPro" id="IPR035904">
    <property type="entry name" value="Chorismate_synth_AroC_sf"/>
</dbReference>
<dbReference type="InterPro" id="IPR020541">
    <property type="entry name" value="Chorismate_synthase_CS"/>
</dbReference>
<dbReference type="NCBIfam" id="TIGR00033">
    <property type="entry name" value="aroC"/>
    <property type="match status" value="1"/>
</dbReference>
<dbReference type="NCBIfam" id="NF003793">
    <property type="entry name" value="PRK05382.1"/>
    <property type="match status" value="1"/>
</dbReference>
<dbReference type="PANTHER" id="PTHR21085">
    <property type="entry name" value="CHORISMATE SYNTHASE"/>
    <property type="match status" value="1"/>
</dbReference>
<dbReference type="PANTHER" id="PTHR21085:SF0">
    <property type="entry name" value="CHORISMATE SYNTHASE"/>
    <property type="match status" value="1"/>
</dbReference>
<dbReference type="Pfam" id="PF01264">
    <property type="entry name" value="Chorismate_synt"/>
    <property type="match status" value="1"/>
</dbReference>
<dbReference type="PIRSF" id="PIRSF001456">
    <property type="entry name" value="Chorismate_synth"/>
    <property type="match status" value="1"/>
</dbReference>
<dbReference type="SUPFAM" id="SSF103263">
    <property type="entry name" value="Chorismate synthase, AroC"/>
    <property type="match status" value="1"/>
</dbReference>
<dbReference type="PROSITE" id="PS00787">
    <property type="entry name" value="CHORISMATE_SYNTHASE_1"/>
    <property type="match status" value="1"/>
</dbReference>
<dbReference type="PROSITE" id="PS00788">
    <property type="entry name" value="CHORISMATE_SYNTHASE_2"/>
    <property type="match status" value="1"/>
</dbReference>
<dbReference type="PROSITE" id="PS00789">
    <property type="entry name" value="CHORISMATE_SYNTHASE_3"/>
    <property type="match status" value="1"/>
</dbReference>
<name>AROC_STRPG</name>
<comment type="function">
    <text evidence="1">Catalyzes the anti-1,4-elimination of the C-3 phosphate and the C-6 proR hydrogen from 5-enolpyruvylshikimate-3-phosphate (EPSP) to yield chorismate, which is the branch point compound that serves as the starting substrate for the three terminal pathways of aromatic amino acid biosynthesis. This reaction introduces a second double bond into the aromatic ring system.</text>
</comment>
<comment type="catalytic activity">
    <reaction evidence="1">
        <text>5-O-(1-carboxyvinyl)-3-phosphoshikimate = chorismate + phosphate</text>
        <dbReference type="Rhea" id="RHEA:21020"/>
        <dbReference type="ChEBI" id="CHEBI:29748"/>
        <dbReference type="ChEBI" id="CHEBI:43474"/>
        <dbReference type="ChEBI" id="CHEBI:57701"/>
        <dbReference type="EC" id="4.2.3.5"/>
    </reaction>
</comment>
<comment type="cofactor">
    <cofactor evidence="1">
        <name>FMNH2</name>
        <dbReference type="ChEBI" id="CHEBI:57618"/>
    </cofactor>
    <text evidence="1">Reduced FMN (FMNH(2)).</text>
</comment>
<comment type="pathway">
    <text evidence="1">Metabolic intermediate biosynthesis; chorismate biosynthesis; chorismate from D-erythrose 4-phosphate and phosphoenolpyruvate: step 7/7.</text>
</comment>
<comment type="subunit">
    <text evidence="1">Homotetramer.</text>
</comment>
<comment type="similarity">
    <text evidence="1">Belongs to the chorismate synthase family.</text>
</comment>
<accession>A2RF78</accession>
<sequence>MRYLTAGESHGLSLTAIIEGIPAGLTLHPADIDHELQRRQGGYGRGTRMSIETDRVQISSGVRHGKTTGAPITLTVINKDHQKWLDVMAVGDIEETLKLKRRVKHPRPGHADLVGGIKYHFNDLRDALERSSARETTMRVAVGAVAKRILAELGIDMLHHILIFGGITITIPSKLSFRELQERALHSELSIVNPKQEEEIKTYIDKIKKEGDTIGGIIETIVQGVPAGLGSYVQWDKKLDAKLAQAVLSINAFKGVEFGVGFDMGFQKGSQVMDEITWTPTQGYGRQTNHLGGFEGGMTTGQPLVVKGVMKPIPTLYKPLMSVDIDSHEPYKATVERSDPTALPAAGVIMENVVATVLAKEILETFSSTTMSELQKAFSDYRAYVKQF</sequence>
<feature type="chain" id="PRO_0000322424" description="Chorismate synthase">
    <location>
        <begin position="1"/>
        <end position="388"/>
    </location>
</feature>
<feature type="binding site" evidence="1">
    <location>
        <position position="39"/>
    </location>
    <ligand>
        <name>NADP(+)</name>
        <dbReference type="ChEBI" id="CHEBI:58349"/>
    </ligand>
</feature>
<feature type="binding site" evidence="1">
    <location>
        <position position="45"/>
    </location>
    <ligand>
        <name>NADP(+)</name>
        <dbReference type="ChEBI" id="CHEBI:58349"/>
    </ligand>
</feature>
<feature type="binding site" evidence="1">
    <location>
        <begin position="130"/>
        <end position="132"/>
    </location>
    <ligand>
        <name>FMN</name>
        <dbReference type="ChEBI" id="CHEBI:58210"/>
    </ligand>
</feature>
<feature type="binding site" evidence="1">
    <location>
        <begin position="251"/>
        <end position="252"/>
    </location>
    <ligand>
        <name>FMN</name>
        <dbReference type="ChEBI" id="CHEBI:58210"/>
    </ligand>
</feature>
<feature type="binding site" evidence="1">
    <location>
        <position position="296"/>
    </location>
    <ligand>
        <name>FMN</name>
        <dbReference type="ChEBI" id="CHEBI:58210"/>
    </ligand>
</feature>
<feature type="binding site" evidence="1">
    <location>
        <begin position="311"/>
        <end position="315"/>
    </location>
    <ligand>
        <name>FMN</name>
        <dbReference type="ChEBI" id="CHEBI:58210"/>
    </ligand>
</feature>
<feature type="binding site" evidence="1">
    <location>
        <position position="337"/>
    </location>
    <ligand>
        <name>FMN</name>
        <dbReference type="ChEBI" id="CHEBI:58210"/>
    </ligand>
</feature>
<evidence type="ECO:0000255" key="1">
    <source>
        <dbReference type="HAMAP-Rule" id="MF_00300"/>
    </source>
</evidence>
<proteinExistence type="inferred from homology"/>
<reference key="1">
    <citation type="journal article" date="2007" name="J. Bacteriol.">
        <title>Complete genome of acute rheumatic fever-associated serotype M5 Streptococcus pyogenes strain Manfredo.</title>
        <authorList>
            <person name="Holden M.T.G."/>
            <person name="Scott A."/>
            <person name="Cherevach I."/>
            <person name="Chillingworth T."/>
            <person name="Churcher C."/>
            <person name="Cronin A."/>
            <person name="Dowd L."/>
            <person name="Feltwell T."/>
            <person name="Hamlin N."/>
            <person name="Holroyd S."/>
            <person name="Jagels K."/>
            <person name="Moule S."/>
            <person name="Mungall K."/>
            <person name="Quail M.A."/>
            <person name="Price C."/>
            <person name="Rabbinowitsch E."/>
            <person name="Sharp S."/>
            <person name="Skelton J."/>
            <person name="Whitehead S."/>
            <person name="Barrell B.G."/>
            <person name="Kehoe M."/>
            <person name="Parkhill J."/>
        </authorList>
    </citation>
    <scope>NUCLEOTIDE SEQUENCE [LARGE SCALE GENOMIC DNA]</scope>
    <source>
        <strain>Manfredo</strain>
    </source>
</reference>
<organism>
    <name type="scientific">Streptococcus pyogenes serotype M5 (strain Manfredo)</name>
    <dbReference type="NCBI Taxonomy" id="160491"/>
    <lineage>
        <taxon>Bacteria</taxon>
        <taxon>Bacillati</taxon>
        <taxon>Bacillota</taxon>
        <taxon>Bacilli</taxon>
        <taxon>Lactobacillales</taxon>
        <taxon>Streptococcaceae</taxon>
        <taxon>Streptococcus</taxon>
    </lineage>
</organism>